<feature type="chain" id="PRO_1000096717" description="N-acetyl-gamma-glutamyl-phosphate reductase">
    <location>
        <begin position="1"/>
        <end position="335"/>
    </location>
</feature>
<feature type="active site" evidence="1">
    <location>
        <position position="147"/>
    </location>
</feature>
<gene>
    <name evidence="1" type="primary">argC</name>
    <name type="ordered locus">CHAB381_1309</name>
</gene>
<protein>
    <recommendedName>
        <fullName evidence="1">N-acetyl-gamma-glutamyl-phosphate reductase</fullName>
        <shortName evidence="1">AGPR</shortName>
        <ecNumber evidence="1">1.2.1.38</ecNumber>
    </recommendedName>
    <alternativeName>
        <fullName evidence="1">N-acetyl-glutamate semialdehyde dehydrogenase</fullName>
        <shortName evidence="1">NAGSA dehydrogenase</shortName>
    </alternativeName>
</protein>
<proteinExistence type="inferred from homology"/>
<reference key="1">
    <citation type="submission" date="2007-07" db="EMBL/GenBank/DDBJ databases">
        <title>Complete genome sequence of Campylobacter hominis ATCC BAA-381, a commensal isolated from the human gastrointestinal tract.</title>
        <authorList>
            <person name="Fouts D.E."/>
            <person name="Mongodin E.F."/>
            <person name="Puiu D."/>
            <person name="Sebastian Y."/>
            <person name="Miller W.G."/>
            <person name="Mandrell R.E."/>
            <person name="Nelson K.E."/>
        </authorList>
    </citation>
    <scope>NUCLEOTIDE SEQUENCE [LARGE SCALE GENOMIC DNA]</scope>
    <source>
        <strain>ATCC BAA-381 / DSM 21671 / CCUG 45161 / LMG 19568 / NCTC 13146 / CH001A</strain>
    </source>
</reference>
<organism>
    <name type="scientific">Campylobacter hominis (strain ATCC BAA-381 / DSM 21671 / CCUG 45161 / LMG 19568 / NCTC 13146 / CH001A)</name>
    <dbReference type="NCBI Taxonomy" id="360107"/>
    <lineage>
        <taxon>Bacteria</taxon>
        <taxon>Pseudomonadati</taxon>
        <taxon>Campylobacterota</taxon>
        <taxon>Epsilonproteobacteria</taxon>
        <taxon>Campylobacterales</taxon>
        <taxon>Campylobacteraceae</taxon>
        <taxon>Campylobacter</taxon>
    </lineage>
</organism>
<dbReference type="EC" id="1.2.1.38" evidence="1"/>
<dbReference type="EMBL" id="CP000776">
    <property type="protein sequence ID" value="ABS51316.1"/>
    <property type="molecule type" value="Genomic_DNA"/>
</dbReference>
<dbReference type="RefSeq" id="WP_012109161.1">
    <property type="nucleotide sequence ID" value="NC_009714.1"/>
</dbReference>
<dbReference type="SMR" id="A7I2W9"/>
<dbReference type="STRING" id="360107.CHAB381_1309"/>
<dbReference type="KEGG" id="cha:CHAB381_1309"/>
<dbReference type="eggNOG" id="COG0002">
    <property type="taxonomic scope" value="Bacteria"/>
</dbReference>
<dbReference type="HOGENOM" id="CLU_006384_0_1_7"/>
<dbReference type="OrthoDB" id="9801289at2"/>
<dbReference type="UniPathway" id="UPA00068">
    <property type="reaction ID" value="UER00108"/>
</dbReference>
<dbReference type="Proteomes" id="UP000002407">
    <property type="component" value="Chromosome"/>
</dbReference>
<dbReference type="GO" id="GO:0005737">
    <property type="term" value="C:cytoplasm"/>
    <property type="evidence" value="ECO:0007669"/>
    <property type="project" value="UniProtKB-SubCell"/>
</dbReference>
<dbReference type="GO" id="GO:0003942">
    <property type="term" value="F:N-acetyl-gamma-glutamyl-phosphate reductase activity"/>
    <property type="evidence" value="ECO:0007669"/>
    <property type="project" value="UniProtKB-UniRule"/>
</dbReference>
<dbReference type="GO" id="GO:0051287">
    <property type="term" value="F:NAD binding"/>
    <property type="evidence" value="ECO:0007669"/>
    <property type="project" value="InterPro"/>
</dbReference>
<dbReference type="GO" id="GO:0070401">
    <property type="term" value="F:NADP+ binding"/>
    <property type="evidence" value="ECO:0007669"/>
    <property type="project" value="InterPro"/>
</dbReference>
<dbReference type="GO" id="GO:0006526">
    <property type="term" value="P:L-arginine biosynthetic process"/>
    <property type="evidence" value="ECO:0007669"/>
    <property type="project" value="UniProtKB-UniRule"/>
</dbReference>
<dbReference type="CDD" id="cd23934">
    <property type="entry name" value="AGPR_1_C"/>
    <property type="match status" value="1"/>
</dbReference>
<dbReference type="CDD" id="cd17895">
    <property type="entry name" value="AGPR_1_N"/>
    <property type="match status" value="1"/>
</dbReference>
<dbReference type="Gene3D" id="3.30.360.10">
    <property type="entry name" value="Dihydrodipicolinate Reductase, domain 2"/>
    <property type="match status" value="1"/>
</dbReference>
<dbReference type="Gene3D" id="3.40.50.720">
    <property type="entry name" value="NAD(P)-binding Rossmann-like Domain"/>
    <property type="match status" value="1"/>
</dbReference>
<dbReference type="HAMAP" id="MF_00150">
    <property type="entry name" value="ArgC_type1"/>
    <property type="match status" value="1"/>
</dbReference>
<dbReference type="InterPro" id="IPR023013">
    <property type="entry name" value="AGPR_AS"/>
</dbReference>
<dbReference type="InterPro" id="IPR000706">
    <property type="entry name" value="AGPR_type-1"/>
</dbReference>
<dbReference type="InterPro" id="IPR036291">
    <property type="entry name" value="NAD(P)-bd_dom_sf"/>
</dbReference>
<dbReference type="InterPro" id="IPR050085">
    <property type="entry name" value="NAGSA_dehydrogenase"/>
</dbReference>
<dbReference type="InterPro" id="IPR000534">
    <property type="entry name" value="Semialdehyde_DH_NAD-bd"/>
</dbReference>
<dbReference type="NCBIfam" id="TIGR01850">
    <property type="entry name" value="argC"/>
    <property type="match status" value="1"/>
</dbReference>
<dbReference type="PANTHER" id="PTHR32338:SF10">
    <property type="entry name" value="N-ACETYL-GAMMA-GLUTAMYL-PHOSPHATE REDUCTASE, CHLOROPLASTIC-RELATED"/>
    <property type="match status" value="1"/>
</dbReference>
<dbReference type="PANTHER" id="PTHR32338">
    <property type="entry name" value="N-ACETYL-GAMMA-GLUTAMYL-PHOSPHATE REDUCTASE, CHLOROPLASTIC-RELATED-RELATED"/>
    <property type="match status" value="1"/>
</dbReference>
<dbReference type="Pfam" id="PF01118">
    <property type="entry name" value="Semialdhyde_dh"/>
    <property type="match status" value="1"/>
</dbReference>
<dbReference type="Pfam" id="PF22698">
    <property type="entry name" value="Semialdhyde_dhC_1"/>
    <property type="match status" value="1"/>
</dbReference>
<dbReference type="SMART" id="SM00859">
    <property type="entry name" value="Semialdhyde_dh"/>
    <property type="match status" value="1"/>
</dbReference>
<dbReference type="SUPFAM" id="SSF55347">
    <property type="entry name" value="Glyceraldehyde-3-phosphate dehydrogenase-like, C-terminal domain"/>
    <property type="match status" value="1"/>
</dbReference>
<dbReference type="SUPFAM" id="SSF51735">
    <property type="entry name" value="NAD(P)-binding Rossmann-fold domains"/>
    <property type="match status" value="1"/>
</dbReference>
<dbReference type="PROSITE" id="PS01224">
    <property type="entry name" value="ARGC"/>
    <property type="match status" value="1"/>
</dbReference>
<name>ARGC_CAMHC</name>
<keyword id="KW-0028">Amino-acid biosynthesis</keyword>
<keyword id="KW-0055">Arginine biosynthesis</keyword>
<keyword id="KW-0963">Cytoplasm</keyword>
<keyword id="KW-0521">NADP</keyword>
<keyword id="KW-0560">Oxidoreductase</keyword>
<keyword id="KW-1185">Reference proteome</keyword>
<accession>A7I2W9</accession>
<sequence length="335" mass="36898">MKKIGIIGVSGYTGLELIKIILNHSGFKLSYLAATSEGEISEIFPQLAGVLNMKVEIADAKEAAKRCDLVFLALPHEKAMEFAREILEFNSTKVVDLSADYRLSLKLYEKNYTKHLDPKNLSHAVYGLVEINREKIKKARLVANPGCYPTCSILAIAPFVNFIDKNIGVFIDAKSGVSGAGKGLKTTSHFVSANENLNAYSPITHRHADEIKEQIGILAGSEIDTIFVPNLVSITRGMSVSVFAVLKEKIDADKILKEFYKDEEFIRFRDEPVQIKNVVGTHFCDIFVRTACNKIFINSAIDNLLKGASSQAVANANLMLDEPENSALPKIAYGI</sequence>
<comment type="function">
    <text evidence="1">Catalyzes the NADPH-dependent reduction of N-acetyl-5-glutamyl phosphate to yield N-acetyl-L-glutamate 5-semialdehyde.</text>
</comment>
<comment type="catalytic activity">
    <reaction evidence="1">
        <text>N-acetyl-L-glutamate 5-semialdehyde + phosphate + NADP(+) = N-acetyl-L-glutamyl 5-phosphate + NADPH + H(+)</text>
        <dbReference type="Rhea" id="RHEA:21588"/>
        <dbReference type="ChEBI" id="CHEBI:15378"/>
        <dbReference type="ChEBI" id="CHEBI:29123"/>
        <dbReference type="ChEBI" id="CHEBI:43474"/>
        <dbReference type="ChEBI" id="CHEBI:57783"/>
        <dbReference type="ChEBI" id="CHEBI:57936"/>
        <dbReference type="ChEBI" id="CHEBI:58349"/>
        <dbReference type="EC" id="1.2.1.38"/>
    </reaction>
</comment>
<comment type="pathway">
    <text evidence="1">Amino-acid biosynthesis; L-arginine biosynthesis; N(2)-acetyl-L-ornithine from L-glutamate: step 3/4.</text>
</comment>
<comment type="subcellular location">
    <subcellularLocation>
        <location evidence="1">Cytoplasm</location>
    </subcellularLocation>
</comment>
<comment type="similarity">
    <text evidence="1">Belongs to the NAGSA dehydrogenase family. Type 1 subfamily.</text>
</comment>
<evidence type="ECO:0000255" key="1">
    <source>
        <dbReference type="HAMAP-Rule" id="MF_00150"/>
    </source>
</evidence>